<accession>C0HLF0</accession>
<proteinExistence type="evidence at protein level"/>
<evidence type="ECO:0000250" key="1">
    <source>
        <dbReference type="UniProtKB" id="P14421"/>
    </source>
</evidence>
<evidence type="ECO:0000255" key="2">
    <source>
        <dbReference type="PROSITE-ProRule" id="PRU10035"/>
    </source>
</evidence>
<evidence type="ECO:0000255" key="3">
    <source>
        <dbReference type="PROSITE-ProRule" id="PRU10036"/>
    </source>
</evidence>
<evidence type="ECO:0000269" key="4">
    <source>
    </source>
</evidence>
<evidence type="ECO:0000303" key="5">
    <source>
    </source>
</evidence>
<evidence type="ECO:0000305" key="6"/>
<evidence type="ECO:0000305" key="7">
    <source>
    </source>
</evidence>
<dbReference type="EC" id="3.1.1.4" evidence="2 4"/>
<dbReference type="SMR" id="C0HLF0"/>
<dbReference type="GO" id="GO:0005576">
    <property type="term" value="C:extracellular region"/>
    <property type="evidence" value="ECO:0007669"/>
    <property type="project" value="UniProtKB-SubCell"/>
</dbReference>
<dbReference type="GO" id="GO:0005509">
    <property type="term" value="F:calcium ion binding"/>
    <property type="evidence" value="ECO:0007669"/>
    <property type="project" value="InterPro"/>
</dbReference>
<dbReference type="GO" id="GO:0047498">
    <property type="term" value="F:calcium-dependent phospholipase A2 activity"/>
    <property type="evidence" value="ECO:0007669"/>
    <property type="project" value="TreeGrafter"/>
</dbReference>
<dbReference type="GO" id="GO:0005543">
    <property type="term" value="F:phospholipid binding"/>
    <property type="evidence" value="ECO:0007669"/>
    <property type="project" value="TreeGrafter"/>
</dbReference>
<dbReference type="GO" id="GO:0090729">
    <property type="term" value="F:toxin activity"/>
    <property type="evidence" value="ECO:0007669"/>
    <property type="project" value="UniProtKB-KW"/>
</dbReference>
<dbReference type="GO" id="GO:0050482">
    <property type="term" value="P:arachidonate secretion"/>
    <property type="evidence" value="ECO:0007669"/>
    <property type="project" value="InterPro"/>
</dbReference>
<dbReference type="GO" id="GO:0016042">
    <property type="term" value="P:lipid catabolic process"/>
    <property type="evidence" value="ECO:0007669"/>
    <property type="project" value="UniProtKB-KW"/>
</dbReference>
<dbReference type="GO" id="GO:0042130">
    <property type="term" value="P:negative regulation of T cell proliferation"/>
    <property type="evidence" value="ECO:0007669"/>
    <property type="project" value="TreeGrafter"/>
</dbReference>
<dbReference type="GO" id="GO:0006644">
    <property type="term" value="P:phospholipid metabolic process"/>
    <property type="evidence" value="ECO:0007669"/>
    <property type="project" value="InterPro"/>
</dbReference>
<dbReference type="CDD" id="cd00125">
    <property type="entry name" value="PLA2c"/>
    <property type="match status" value="1"/>
</dbReference>
<dbReference type="FunFam" id="1.20.90.10:FF:000001">
    <property type="entry name" value="Basic phospholipase A2 homolog"/>
    <property type="match status" value="1"/>
</dbReference>
<dbReference type="Gene3D" id="1.20.90.10">
    <property type="entry name" value="Phospholipase A2 domain"/>
    <property type="match status" value="1"/>
</dbReference>
<dbReference type="InterPro" id="IPR001211">
    <property type="entry name" value="PLipase_A2"/>
</dbReference>
<dbReference type="InterPro" id="IPR033112">
    <property type="entry name" value="PLipase_A2_Asp_AS"/>
</dbReference>
<dbReference type="InterPro" id="IPR016090">
    <property type="entry name" value="PLipase_A2_dom"/>
</dbReference>
<dbReference type="InterPro" id="IPR036444">
    <property type="entry name" value="PLipase_A2_dom_sf"/>
</dbReference>
<dbReference type="InterPro" id="IPR033113">
    <property type="entry name" value="PLipase_A2_His_AS"/>
</dbReference>
<dbReference type="PANTHER" id="PTHR11716">
    <property type="entry name" value="PHOSPHOLIPASE A2 FAMILY MEMBER"/>
    <property type="match status" value="1"/>
</dbReference>
<dbReference type="PANTHER" id="PTHR11716:SF9">
    <property type="entry name" value="PHOSPHOLIPASE A2, MEMBRANE ASSOCIATED"/>
    <property type="match status" value="1"/>
</dbReference>
<dbReference type="Pfam" id="PF00068">
    <property type="entry name" value="Phospholip_A2_1"/>
    <property type="match status" value="1"/>
</dbReference>
<dbReference type="PRINTS" id="PR00389">
    <property type="entry name" value="PHPHLIPASEA2"/>
</dbReference>
<dbReference type="SMART" id="SM00085">
    <property type="entry name" value="PA2c"/>
    <property type="match status" value="1"/>
</dbReference>
<dbReference type="SUPFAM" id="SSF48619">
    <property type="entry name" value="Phospholipase A2, PLA2"/>
    <property type="match status" value="1"/>
</dbReference>
<dbReference type="PROSITE" id="PS00119">
    <property type="entry name" value="PA2_ASP"/>
    <property type="match status" value="1"/>
</dbReference>
<dbReference type="PROSITE" id="PS00118">
    <property type="entry name" value="PA2_HIS"/>
    <property type="match status" value="1"/>
</dbReference>
<protein>
    <recommendedName>
        <fullName evidence="5">Basic phospholipase A2</fullName>
        <shortName evidence="5">PoPLA2</shortName>
        <shortName evidence="5">PophPLA2</shortName>
        <shortName evidence="6">svPLA2</shortName>
        <ecNumber evidence="2 4">3.1.1.4</ecNumber>
    </recommendedName>
    <alternativeName>
        <fullName evidence="6">Phosphatidylcholine 2-acylhydrolase</fullName>
    </alternativeName>
</protein>
<name>PA2_POROP</name>
<sequence>NLFQFRKMIKKMTKKEPVVYYAFYGCYCGKGGRGKPKDATDRCCFVHDCCYEKVTGCNPKWGYYTYSMNKQIVCGGDDPCKKQVCECDKAAAICFRDNLKTYKKKYMSFPNFFCTDPSEKC</sequence>
<reference evidence="6" key="1">
    <citation type="journal article" date="2018" name="Int. J. Biol. Macromol.">
        <title>A novel pentameric phospholipase A2 myotoxin (PophPLA2) from the venom of the pit viper Porthidium ophryomegas.</title>
        <authorList>
            <person name="Vindas J."/>
            <person name="Carrera Y."/>
            <person name="Lomonte B."/>
            <person name="Gutierrez J.M."/>
            <person name="Calvete J.J."/>
            <person name="Sanz L."/>
            <person name="Fernandez J."/>
        </authorList>
    </citation>
    <scope>PROTEIN SEQUENCE</scope>
    <scope>MASS SPECTROMETRY</scope>
    <scope>FUNCTION</scope>
    <scope>CATALYTIC ACTIVITY</scope>
    <scope>SUBUNIT</scope>
    <scope>COFACTOR</scope>
    <scope>SUBCELLULAR LOCATION</scope>
    <source>
        <strain evidence="5">Costa Rica</strain>
        <tissue evidence="5">Venom</tissue>
    </source>
</reference>
<organism>
    <name type="scientific">Porthidium ophryomegas</name>
    <name type="common">Slender hognose viper</name>
    <dbReference type="NCBI Taxonomy" id="44717"/>
    <lineage>
        <taxon>Eukaryota</taxon>
        <taxon>Metazoa</taxon>
        <taxon>Chordata</taxon>
        <taxon>Craniata</taxon>
        <taxon>Vertebrata</taxon>
        <taxon>Euteleostomi</taxon>
        <taxon>Lepidosauria</taxon>
        <taxon>Squamata</taxon>
        <taxon>Bifurcata</taxon>
        <taxon>Unidentata</taxon>
        <taxon>Episquamata</taxon>
        <taxon>Toxicofera</taxon>
        <taxon>Serpentes</taxon>
        <taxon>Colubroidea</taxon>
        <taxon>Viperidae</taxon>
        <taxon>Crotalinae</taxon>
        <taxon>Porthidium</taxon>
    </lineage>
</organism>
<keyword id="KW-1203">Blood coagulation cascade inhibiting toxin</keyword>
<keyword id="KW-0106">Calcium</keyword>
<keyword id="KW-0903">Direct protein sequencing</keyword>
<keyword id="KW-1015">Disulfide bond</keyword>
<keyword id="KW-1199">Hemostasis impairing toxin</keyword>
<keyword id="KW-0378">Hydrolase</keyword>
<keyword id="KW-0442">Lipid degradation</keyword>
<keyword id="KW-0443">Lipid metabolism</keyword>
<keyword id="KW-0479">Metal-binding</keyword>
<keyword id="KW-0959">Myotoxin</keyword>
<keyword id="KW-0597">Phosphoprotein</keyword>
<keyword id="KW-0964">Secreted</keyword>
<keyword id="KW-0800">Toxin</keyword>
<comment type="function">
    <text evidence="4">Snake venom phospholipase A2 (PLA2) that displays moderate myotoxic activity in vivo, and cytotoxic activity in vitro. In vitro, shows anticoagulant activity on human plasma and in mice causes inflammatory cell infiltration and myonecrosis in the gastrocnemius muscles of CD-1 mice 3 hours after injection (100 ug). PLA2 catalyzes the calcium-dependent hydrolysis of the 2-acyl groups in 3-sn-phosphoglycerides.</text>
</comment>
<comment type="catalytic activity">
    <reaction evidence="2 3 4">
        <text>a 1,2-diacyl-sn-glycero-3-phosphocholine + H2O = a 1-acyl-sn-glycero-3-phosphocholine + a fatty acid + H(+)</text>
        <dbReference type="Rhea" id="RHEA:15801"/>
        <dbReference type="ChEBI" id="CHEBI:15377"/>
        <dbReference type="ChEBI" id="CHEBI:15378"/>
        <dbReference type="ChEBI" id="CHEBI:28868"/>
        <dbReference type="ChEBI" id="CHEBI:57643"/>
        <dbReference type="ChEBI" id="CHEBI:58168"/>
        <dbReference type="EC" id="3.1.1.4"/>
    </reaction>
</comment>
<comment type="cofactor">
    <cofactor evidence="4">
        <name>Ca(2+)</name>
        <dbReference type="ChEBI" id="CHEBI:29108"/>
    </cofactor>
</comment>
<comment type="subunit">
    <text evidence="4">Homopentamer.</text>
</comment>
<comment type="subcellular location">
    <subcellularLocation>
        <location evidence="4">Secreted</location>
    </subcellularLocation>
</comment>
<comment type="tissue specificity">
    <text evidence="7">Expressed by the venom gland.</text>
</comment>
<comment type="mass spectrometry"/>
<comment type="similarity">
    <text evidence="6">Belongs to the phospholipase A2 family. Group I subfamily. D49 sub-subfamily.</text>
</comment>
<feature type="chain" id="PRO_0000446057" description="Basic phospholipase A2" evidence="4">
    <location>
        <begin position="1"/>
        <end position="121"/>
    </location>
</feature>
<feature type="active site" evidence="2">
    <location>
        <position position="47"/>
    </location>
</feature>
<feature type="active site" evidence="3">
    <location>
        <position position="88"/>
    </location>
</feature>
<feature type="binding site" evidence="1">
    <location>
        <position position="27"/>
    </location>
    <ligand>
        <name>Ca(2+)</name>
        <dbReference type="ChEBI" id="CHEBI:29108"/>
    </ligand>
</feature>
<feature type="binding site" evidence="1">
    <location>
        <position position="29"/>
    </location>
    <ligand>
        <name>Ca(2+)</name>
        <dbReference type="ChEBI" id="CHEBI:29108"/>
    </ligand>
</feature>
<feature type="binding site" evidence="1">
    <location>
        <position position="31"/>
    </location>
    <ligand>
        <name>Ca(2+)</name>
        <dbReference type="ChEBI" id="CHEBI:29108"/>
    </ligand>
</feature>
<feature type="binding site" evidence="1">
    <location>
        <position position="48"/>
    </location>
    <ligand>
        <name>Ca(2+)</name>
        <dbReference type="ChEBI" id="CHEBI:29108"/>
    </ligand>
</feature>
<feature type="disulfide bond" evidence="1">
    <location>
        <begin position="26"/>
        <end position="114"/>
    </location>
</feature>
<feature type="disulfide bond" evidence="1">
    <location>
        <begin position="28"/>
        <end position="44"/>
    </location>
</feature>
<feature type="disulfide bond" evidence="1">
    <location>
        <begin position="43"/>
        <end position="94"/>
    </location>
</feature>
<feature type="disulfide bond" evidence="1">
    <location>
        <begin position="49"/>
        <end position="121"/>
    </location>
</feature>
<feature type="disulfide bond" evidence="1">
    <location>
        <begin position="50"/>
        <end position="87"/>
    </location>
</feature>
<feature type="disulfide bond" evidence="1">
    <location>
        <begin position="57"/>
        <end position="80"/>
    </location>
</feature>
<feature type="disulfide bond" evidence="1">
    <location>
        <begin position="74"/>
        <end position="85"/>
    </location>
</feature>